<sequence>MFVKAILLLSIAVAYASADCLHCICMRESGCKPIGCHMDVGSLSCGYYQIKIPYYEDCGQPGKKHGESTEVAWKRCADDLKCATNCVENYYNRYKHECAGTGQGACEVMARNHNGGPRGCHASGTLGYWKGVHSCCGCS</sequence>
<keyword id="KW-0044">Antibiotic</keyword>
<keyword id="KW-0929">Antimicrobial</keyword>
<keyword id="KW-0081">Bacteriolytic enzyme</keyword>
<keyword id="KW-1015">Disulfide bond</keyword>
<keyword id="KW-0326">Glycosidase</keyword>
<keyword id="KW-0378">Hydrolase</keyword>
<keyword id="KW-1185">Reference proteome</keyword>
<keyword id="KW-0732">Signal</keyword>
<proteinExistence type="evidence at transcript level"/>
<accession>O76358</accession>
<reference evidence="8" key="1">
    <citation type="journal article" date="1998" name="Science">
        <title>Genome sequence of the nematode C. elegans: a platform for investigating biology.</title>
        <authorList>
            <consortium name="The C. elegans sequencing consortium"/>
        </authorList>
    </citation>
    <scope>NUCLEOTIDE SEQUENCE [LARGE SCALE GENOMIC DNA]</scope>
    <source>
        <strain evidence="8">Bristol N2</strain>
    </source>
</reference>
<reference evidence="7" key="2">
    <citation type="journal article" date="2014" name="Immunity">
        <title>Innate host defense requires TFEB-mediated transcription of cytoprotective and antimicrobial genes.</title>
        <authorList>
            <person name="Visvikis O."/>
            <person name="Ihuegbu N."/>
            <person name="Labed S.A."/>
            <person name="Luhachack L.G."/>
            <person name="Alves A.M."/>
            <person name="Wollenberg A.C."/>
            <person name="Stuart L.M."/>
            <person name="Stormo G.D."/>
            <person name="Irazoqui J.E."/>
        </authorList>
    </citation>
    <scope>FUNCTION</scope>
    <scope>INDUCTION</scope>
    <scope>DISRUPTION PHENOTYPE</scope>
</reference>
<reference evidence="7" key="3">
    <citation type="journal article" date="2016" name="PLoS Pathog.">
        <title>The invertebrate lysozyme effector ILYS-3 is systemically activated in response to danger signals and confers antimicrobial protection in C. elegans.</title>
        <authorList>
            <person name="Gravato-Nobre M.J."/>
            <person name="Vaz F."/>
            <person name="Filipe S."/>
            <person name="Chalmers R."/>
            <person name="Hodgkin J."/>
        </authorList>
    </citation>
    <scope>TISSUE SPECIFICITY</scope>
    <scope>INDUCTION</scope>
</reference>
<protein>
    <recommendedName>
        <fullName evidence="7">Invertebrate-type lysozyme 2</fullName>
        <ecNumber evidence="1">3.2.1.17</ecNumber>
    </recommendedName>
    <alternativeName>
        <fullName evidence="7">1,4-beta-N-acetylmuramidase</fullName>
    </alternativeName>
</protein>
<dbReference type="EC" id="3.2.1.17" evidence="1"/>
<dbReference type="EMBL" id="BX284604">
    <property type="protein sequence ID" value="CCD65530.1"/>
    <property type="molecule type" value="Genomic_DNA"/>
</dbReference>
<dbReference type="PIR" id="T33138">
    <property type="entry name" value="T33138"/>
</dbReference>
<dbReference type="RefSeq" id="NP_500207.1">
    <property type="nucleotide sequence ID" value="NM_067806.3"/>
</dbReference>
<dbReference type="SMR" id="O76358"/>
<dbReference type="FunCoup" id="O76358">
    <property type="interactions" value="4"/>
</dbReference>
<dbReference type="STRING" id="6239.C45G7.2.1"/>
<dbReference type="CAZy" id="GH22">
    <property type="family name" value="Glycoside Hydrolase Family 22"/>
</dbReference>
<dbReference type="MEROPS" id="S81.001"/>
<dbReference type="PaxDb" id="6239-C45G7.2"/>
<dbReference type="PeptideAtlas" id="O76358"/>
<dbReference type="EnsemblMetazoa" id="C45G7.2.1">
    <property type="protein sequence ID" value="C45G7.2.1"/>
    <property type="gene ID" value="WBGene00016669"/>
</dbReference>
<dbReference type="GeneID" id="183475"/>
<dbReference type="KEGG" id="cel:CELE_C45G7.2"/>
<dbReference type="UCSC" id="C45G7.2">
    <property type="organism name" value="c. elegans"/>
</dbReference>
<dbReference type="AGR" id="WB:WBGene00016669"/>
<dbReference type="CTD" id="183475"/>
<dbReference type="WormBase" id="C45G7.2">
    <property type="protein sequence ID" value="CE17549"/>
    <property type="gene ID" value="WBGene00016669"/>
    <property type="gene designation" value="ilys-2"/>
</dbReference>
<dbReference type="eggNOG" id="ENOG502SAEY">
    <property type="taxonomic scope" value="Eukaryota"/>
</dbReference>
<dbReference type="GeneTree" id="ENSGT00940000166559"/>
<dbReference type="HOGENOM" id="CLU_130604_1_0_1"/>
<dbReference type="InParanoid" id="O76358"/>
<dbReference type="OMA" id="HITRAYW"/>
<dbReference type="OrthoDB" id="6337871at2759"/>
<dbReference type="PhylomeDB" id="O76358"/>
<dbReference type="PRO" id="PR:O76358"/>
<dbReference type="Proteomes" id="UP000001940">
    <property type="component" value="Chromosome IV"/>
</dbReference>
<dbReference type="Bgee" id="WBGene00016669">
    <property type="expression patterns" value="Expressed in adult organism and 1 other cell type or tissue"/>
</dbReference>
<dbReference type="GO" id="GO:0003796">
    <property type="term" value="F:lysozyme activity"/>
    <property type="evidence" value="ECO:0000318"/>
    <property type="project" value="GO_Central"/>
</dbReference>
<dbReference type="GO" id="GO:0050830">
    <property type="term" value="P:defense response to Gram-positive bacterium"/>
    <property type="evidence" value="ECO:0000316"/>
    <property type="project" value="WormBase"/>
</dbReference>
<dbReference type="GO" id="GO:0031640">
    <property type="term" value="P:killing of cells of another organism"/>
    <property type="evidence" value="ECO:0007669"/>
    <property type="project" value="UniProtKB-KW"/>
</dbReference>
<dbReference type="CDD" id="cd16890">
    <property type="entry name" value="lyz_i"/>
    <property type="match status" value="1"/>
</dbReference>
<dbReference type="FunFam" id="1.10.530.10:FF:000023">
    <property type="entry name" value="Invertebrate-type lysozyme"/>
    <property type="match status" value="1"/>
</dbReference>
<dbReference type="Gene3D" id="1.10.530.10">
    <property type="match status" value="1"/>
</dbReference>
<dbReference type="InterPro" id="IPR008597">
    <property type="entry name" value="Invert_lysozyme"/>
</dbReference>
<dbReference type="InterPro" id="IPR023346">
    <property type="entry name" value="Lysozyme-like_dom_sf"/>
</dbReference>
<dbReference type="PANTHER" id="PTHR11195">
    <property type="entry name" value="DESTABILASE-RELATED"/>
    <property type="match status" value="1"/>
</dbReference>
<dbReference type="PANTHER" id="PTHR11195:SF13">
    <property type="entry name" value="INVERTEBRATE-TYPE LYSOZYME 2-RELATED"/>
    <property type="match status" value="1"/>
</dbReference>
<dbReference type="Pfam" id="PF05497">
    <property type="entry name" value="Destabilase"/>
    <property type="match status" value="1"/>
</dbReference>
<dbReference type="SUPFAM" id="SSF53955">
    <property type="entry name" value="Lysozyme-like"/>
    <property type="match status" value="1"/>
</dbReference>
<dbReference type="PROSITE" id="PS51909">
    <property type="entry name" value="LYSOZYME_I"/>
    <property type="match status" value="1"/>
</dbReference>
<name>ILYS2_CAEEL</name>
<evidence type="ECO:0000250" key="1">
    <source>
        <dbReference type="UniProtKB" id="O76357"/>
    </source>
</evidence>
<evidence type="ECO:0000250" key="2">
    <source>
        <dbReference type="UniProtKB" id="Q8IU26"/>
    </source>
</evidence>
<evidence type="ECO:0000255" key="3"/>
<evidence type="ECO:0000255" key="4">
    <source>
        <dbReference type="PROSITE-ProRule" id="PRU01257"/>
    </source>
</evidence>
<evidence type="ECO:0000269" key="5">
    <source>
    </source>
</evidence>
<evidence type="ECO:0000269" key="6">
    <source>
    </source>
</evidence>
<evidence type="ECO:0000305" key="7"/>
<evidence type="ECO:0000312" key="8">
    <source>
        <dbReference type="Proteomes" id="UP000001940"/>
    </source>
</evidence>
<evidence type="ECO:0000312" key="9">
    <source>
        <dbReference type="WormBase" id="C45G7.2"/>
    </source>
</evidence>
<feature type="signal peptide" evidence="3">
    <location>
        <begin position="1"/>
        <end position="18"/>
    </location>
</feature>
<feature type="chain" id="PRO_5004159765" description="Invertebrate-type lysozyme 2" evidence="3">
    <location>
        <begin position="19"/>
        <end position="139"/>
    </location>
</feature>
<feature type="domain" description="I-type lysozyme" evidence="4">
    <location>
        <begin position="19"/>
        <end position="138"/>
    </location>
</feature>
<feature type="active site" description="Proton donor" evidence="4">
    <location>
        <position position="28"/>
    </location>
</feature>
<feature type="active site" description="Nucleophile" evidence="4">
    <location>
        <position position="39"/>
    </location>
</feature>
<feature type="binding site" evidence="2">
    <location>
        <begin position="51"/>
        <end position="57"/>
    </location>
    <ligand>
        <name>substrate</name>
    </ligand>
</feature>
<feature type="binding site" evidence="2">
    <location>
        <position position="90"/>
    </location>
    <ligand>
        <name>substrate</name>
    </ligand>
</feature>
<feature type="binding site" evidence="2">
    <location>
        <begin position="113"/>
        <end position="115"/>
    </location>
    <ligand>
        <name>substrate</name>
    </ligand>
</feature>
<feature type="disulfide bond" evidence="4">
    <location>
        <begin position="20"/>
        <end position="106"/>
    </location>
</feature>
<feature type="disulfide bond" evidence="4">
    <location>
        <begin position="23"/>
        <end position="138"/>
    </location>
</feature>
<feature type="disulfide bond" evidence="4">
    <location>
        <begin position="25"/>
        <end position="31"/>
    </location>
</feature>
<feature type="disulfide bond" evidence="4">
    <location>
        <begin position="36"/>
        <end position="45"/>
    </location>
</feature>
<feature type="disulfide bond" evidence="4">
    <location>
        <begin position="58"/>
        <end position="86"/>
    </location>
</feature>
<feature type="disulfide bond" evidence="4">
    <location>
        <begin position="76"/>
        <end position="82"/>
    </location>
</feature>
<feature type="disulfide bond" evidence="4">
    <location>
        <begin position="98"/>
        <end position="120"/>
    </location>
</feature>
<comment type="function">
    <text evidence="1 5">Has bacteriolytic activity against Gram-positive bacteria (By similarity). May play a role in resistance to Gram-positive bacterium S.aureus infection (PubMed:24882217).</text>
</comment>
<comment type="catalytic activity">
    <reaction evidence="1">
        <text>Hydrolysis of (1-&gt;4)-beta-linkages between N-acetylmuramic acid and N-acetyl-D-glucosamine residues in a peptidoglycan and between N-acetyl-D-glucosamine residues in chitodextrins.</text>
        <dbReference type="EC" id="3.2.1.17"/>
    </reaction>
</comment>
<comment type="tissue specificity">
    <text evidence="6">Expressed in pharyngeal muscle cell pm3, nerve ring and intestine.</text>
</comment>
<comment type="induction">
    <text evidence="5 6">Induced by Gram-positive bacterium M.nematophilum CBX102 infection but not by Gram-negative bacterium P.aeruginosa PAO1 infection (PubMed:27525822). Induced by Gram-positive bacterium S.aureus infection (PubMed:24882217).</text>
</comment>
<comment type="disruption phenotype">
    <text evidence="5">Simultaneous RNAi-mediated knockdown of lys-5 results in a reduction in survival following S.aureus infection.</text>
</comment>
<comment type="similarity">
    <text evidence="4">Belongs to the glycosyl hydrolase 22 family. Type-I lysozyme subfamily.</text>
</comment>
<organism evidence="8">
    <name type="scientific">Caenorhabditis elegans</name>
    <dbReference type="NCBI Taxonomy" id="6239"/>
    <lineage>
        <taxon>Eukaryota</taxon>
        <taxon>Metazoa</taxon>
        <taxon>Ecdysozoa</taxon>
        <taxon>Nematoda</taxon>
        <taxon>Chromadorea</taxon>
        <taxon>Rhabditida</taxon>
        <taxon>Rhabditina</taxon>
        <taxon>Rhabditomorpha</taxon>
        <taxon>Rhabditoidea</taxon>
        <taxon>Rhabditidae</taxon>
        <taxon>Peloderinae</taxon>
        <taxon>Caenorhabditis</taxon>
    </lineage>
</organism>
<gene>
    <name evidence="9" type="primary">ilys-2</name>
    <name evidence="9" type="ORF">C45G7.2</name>
</gene>